<dbReference type="EMBL" id="AF164402">
    <property type="protein sequence ID" value="AAF66189.1"/>
    <property type="molecule type" value="Genomic_DNA"/>
</dbReference>
<dbReference type="GO" id="GO:0009507">
    <property type="term" value="C:chloroplast"/>
    <property type="evidence" value="ECO:0007669"/>
    <property type="project" value="UniProtKB-SubCell"/>
</dbReference>
<dbReference type="GO" id="GO:0003723">
    <property type="term" value="F:RNA binding"/>
    <property type="evidence" value="ECO:0007669"/>
    <property type="project" value="UniProtKB-KW"/>
</dbReference>
<dbReference type="GO" id="GO:0006397">
    <property type="term" value="P:mRNA processing"/>
    <property type="evidence" value="ECO:0007669"/>
    <property type="project" value="UniProtKB-KW"/>
</dbReference>
<dbReference type="GO" id="GO:0008380">
    <property type="term" value="P:RNA splicing"/>
    <property type="evidence" value="ECO:0007669"/>
    <property type="project" value="UniProtKB-UniRule"/>
</dbReference>
<dbReference type="GO" id="GO:0008033">
    <property type="term" value="P:tRNA processing"/>
    <property type="evidence" value="ECO:0007669"/>
    <property type="project" value="UniProtKB-KW"/>
</dbReference>
<dbReference type="HAMAP" id="MF_01390">
    <property type="entry name" value="MatK"/>
    <property type="match status" value="1"/>
</dbReference>
<dbReference type="InterPro" id="IPR024937">
    <property type="entry name" value="Domain_X"/>
</dbReference>
<dbReference type="InterPro" id="IPR002866">
    <property type="entry name" value="Maturase_MatK"/>
</dbReference>
<dbReference type="InterPro" id="IPR024942">
    <property type="entry name" value="Maturase_MatK_N"/>
</dbReference>
<dbReference type="PANTHER" id="PTHR34811">
    <property type="entry name" value="MATURASE K"/>
    <property type="match status" value="1"/>
</dbReference>
<dbReference type="PANTHER" id="PTHR34811:SF1">
    <property type="entry name" value="MATURASE K"/>
    <property type="match status" value="1"/>
</dbReference>
<dbReference type="Pfam" id="PF01348">
    <property type="entry name" value="Intron_maturas2"/>
    <property type="match status" value="1"/>
</dbReference>
<dbReference type="Pfam" id="PF01824">
    <property type="entry name" value="MatK_N"/>
    <property type="match status" value="1"/>
</dbReference>
<geneLocation type="chloroplast"/>
<sequence>MEKFEGYSEKHKSRQQYFVYPLLFQEYIYAFAHDYGLNDSEPVEIVSRNNKKFSSLLVKRLIIRMYQQNFGINLVNHPNQDRLLDYKIGFYSEFYSQILSEGFAIVVEIPFSLRELPCPKEKEIPKFQNLRSIHSIFPFLEDTFLHLDYLSHIEIPYPIHLEILVQLLQYRIQDVPSLHLLRFFLNYYSNWNSFITSMKSIFIFKKENKRLFRFLYNSYLSEYEFFLLFLRKQSSCLPLASSGTFLERIHFSRKMEHFGIMYPGFFRKTIWFFMDPLMHYVRYQGKAIFASKGTLFFNKKWKWYLIHLWQYFFSFWTQPRRIHLNQLANSCFDFMGYLSSVPKSPLLVRNQMLENSFLIDTRMPKFDTIVPVTALIGYLSKAQFCTGSGHPISKPIWTDLSDWDILDRFGRICRNLFHYHSGSSKKRTLYRLKYILRLSCARTLARKHKSTVRTFMQRLGSAFLEEFFTEEELVFSLMFTKTTLFSFCGSHSERIWYFDIIRINDLVKPLN</sequence>
<comment type="function">
    <text evidence="1">Usually encoded in the trnK tRNA gene intron. Probably assists in splicing its own and other chloroplast group II introns.</text>
</comment>
<comment type="subcellular location">
    <subcellularLocation>
        <location>Plastid</location>
        <location>Chloroplast</location>
    </subcellularLocation>
</comment>
<comment type="similarity">
    <text evidence="1">Belongs to the intron maturase 2 family. MatK subfamily.</text>
</comment>
<name>MATK_POAPR</name>
<evidence type="ECO:0000255" key="1">
    <source>
        <dbReference type="HAMAP-Rule" id="MF_01390"/>
    </source>
</evidence>
<reference key="1">
    <citation type="journal article" date="1999" name="Ann. Mo. Bot. Gard.">
        <title>Phylogeny of Poaceae inferred from matK sequences.</title>
        <authorList>
            <person name="Hilu K.W."/>
            <person name="Alice L.A."/>
            <person name="Liang H."/>
        </authorList>
    </citation>
    <scope>NUCLEOTIDE SEQUENCE [GENOMIC DNA]</scope>
</reference>
<proteinExistence type="inferred from homology"/>
<protein>
    <recommendedName>
        <fullName evidence="1">Maturase K</fullName>
    </recommendedName>
    <alternativeName>
        <fullName evidence="1">Intron maturase</fullName>
    </alternativeName>
</protein>
<feature type="chain" id="PRO_0000143643" description="Maturase K">
    <location>
        <begin position="1"/>
        <end position="511"/>
    </location>
</feature>
<gene>
    <name evidence="1" type="primary">matK</name>
</gene>
<organism>
    <name type="scientific">Poa pratensis</name>
    <name type="common">Kentucky bluegrass</name>
    <name type="synonym">Phalaris japonica</name>
    <dbReference type="NCBI Taxonomy" id="4545"/>
    <lineage>
        <taxon>Eukaryota</taxon>
        <taxon>Viridiplantae</taxon>
        <taxon>Streptophyta</taxon>
        <taxon>Embryophyta</taxon>
        <taxon>Tracheophyta</taxon>
        <taxon>Spermatophyta</taxon>
        <taxon>Magnoliopsida</taxon>
        <taxon>Liliopsida</taxon>
        <taxon>Poales</taxon>
        <taxon>Poaceae</taxon>
        <taxon>BOP clade</taxon>
        <taxon>Pooideae</taxon>
        <taxon>Poodae</taxon>
        <taxon>Poeae</taxon>
        <taxon>Poeae Chloroplast Group 2 (Poeae type)</taxon>
        <taxon>Poodinae</taxon>
        <taxon>Poinae</taxon>
        <taxon>Poa</taxon>
    </lineage>
</organism>
<keyword id="KW-0150">Chloroplast</keyword>
<keyword id="KW-0507">mRNA processing</keyword>
<keyword id="KW-0934">Plastid</keyword>
<keyword id="KW-0694">RNA-binding</keyword>
<keyword id="KW-0819">tRNA processing</keyword>
<accession>Q9MUY9</accession>